<name>END8_SALHS</name>
<feature type="initiator methionine" description="Removed" evidence="1">
    <location>
        <position position="1"/>
    </location>
</feature>
<feature type="chain" id="PRO_1000139943" description="Endonuclease 8">
    <location>
        <begin position="2"/>
        <end position="263"/>
    </location>
</feature>
<feature type="zinc finger region" description="FPG-type" evidence="1">
    <location>
        <begin position="229"/>
        <end position="263"/>
    </location>
</feature>
<feature type="active site" description="Schiff-base intermediate with DNA" evidence="1">
    <location>
        <position position="2"/>
    </location>
</feature>
<feature type="active site" description="Proton donor" evidence="1">
    <location>
        <position position="3"/>
    </location>
</feature>
<feature type="active site" description="Proton donor; for beta-elimination activity" evidence="1">
    <location>
        <position position="53"/>
    </location>
</feature>
<feature type="active site" description="Proton donor; for delta-elimination activity" evidence="1">
    <location>
        <position position="253"/>
    </location>
</feature>
<feature type="binding site" evidence="1">
    <location>
        <position position="70"/>
    </location>
    <ligand>
        <name>DNA</name>
        <dbReference type="ChEBI" id="CHEBI:16991"/>
    </ligand>
</feature>
<feature type="binding site" evidence="1">
    <location>
        <position position="125"/>
    </location>
    <ligand>
        <name>DNA</name>
        <dbReference type="ChEBI" id="CHEBI:16991"/>
    </ligand>
</feature>
<feature type="binding site" evidence="1">
    <location>
        <position position="169"/>
    </location>
    <ligand>
        <name>DNA</name>
        <dbReference type="ChEBI" id="CHEBI:16991"/>
    </ligand>
</feature>
<organism>
    <name type="scientific">Salmonella heidelberg (strain SL476)</name>
    <dbReference type="NCBI Taxonomy" id="454169"/>
    <lineage>
        <taxon>Bacteria</taxon>
        <taxon>Pseudomonadati</taxon>
        <taxon>Pseudomonadota</taxon>
        <taxon>Gammaproteobacteria</taxon>
        <taxon>Enterobacterales</taxon>
        <taxon>Enterobacteriaceae</taxon>
        <taxon>Salmonella</taxon>
    </lineage>
</organism>
<evidence type="ECO:0000255" key="1">
    <source>
        <dbReference type="HAMAP-Rule" id="MF_01253"/>
    </source>
</evidence>
<comment type="function">
    <text evidence="1">Involved in base excision repair of DNA damaged by oxidation or by mutagenic agents. Acts as a DNA glycosylase that recognizes and removes damaged bases. Has a preference for oxidized pyrimidines, such as thymine glycol, 5,6-dihydrouracil and 5,6-dihydrothymine. Has AP (apurinic/apyrimidinic) lyase activity and introduces nicks in the DNA strand. Cleaves the DNA backbone by beta-delta elimination to generate a single-strand break at the site of the removed base with both 3'- and 5'-phosphates.</text>
</comment>
<comment type="catalytic activity">
    <reaction evidence="1">
        <text>2'-deoxyribonucleotide-(2'-deoxyribose 5'-phosphate)-2'-deoxyribonucleotide-DNA = a 3'-end 2'-deoxyribonucleotide-(2,3-dehydro-2,3-deoxyribose 5'-phosphate)-DNA + a 5'-end 5'-phospho-2'-deoxyribonucleoside-DNA + H(+)</text>
        <dbReference type="Rhea" id="RHEA:66592"/>
        <dbReference type="Rhea" id="RHEA-COMP:13180"/>
        <dbReference type="Rhea" id="RHEA-COMP:16897"/>
        <dbReference type="Rhea" id="RHEA-COMP:17067"/>
        <dbReference type="ChEBI" id="CHEBI:15378"/>
        <dbReference type="ChEBI" id="CHEBI:136412"/>
        <dbReference type="ChEBI" id="CHEBI:157695"/>
        <dbReference type="ChEBI" id="CHEBI:167181"/>
        <dbReference type="EC" id="4.2.99.18"/>
    </reaction>
</comment>
<comment type="cofactor">
    <cofactor evidence="1">
        <name>Zn(2+)</name>
        <dbReference type="ChEBI" id="CHEBI:29105"/>
    </cofactor>
    <text evidence="1">Binds 1 zinc ion per subunit.</text>
</comment>
<comment type="similarity">
    <text evidence="1">Belongs to the FPG family.</text>
</comment>
<keyword id="KW-0227">DNA damage</keyword>
<keyword id="KW-0234">DNA repair</keyword>
<keyword id="KW-0238">DNA-binding</keyword>
<keyword id="KW-0326">Glycosidase</keyword>
<keyword id="KW-0378">Hydrolase</keyword>
<keyword id="KW-0456">Lyase</keyword>
<keyword id="KW-0479">Metal-binding</keyword>
<keyword id="KW-0511">Multifunctional enzyme</keyword>
<keyword id="KW-0862">Zinc</keyword>
<keyword id="KW-0863">Zinc-finger</keyword>
<protein>
    <recommendedName>
        <fullName evidence="1">Endonuclease 8</fullName>
    </recommendedName>
    <alternativeName>
        <fullName evidence="1">DNA glycosylase/AP lyase Nei</fullName>
        <ecNumber evidence="1">3.2.2.-</ecNumber>
        <ecNumber evidence="1">4.2.99.18</ecNumber>
    </alternativeName>
    <alternativeName>
        <fullName evidence="1">DNA-(apurinic or apyrimidinic site) lyase Nei</fullName>
    </alternativeName>
    <alternativeName>
        <fullName evidence="1">Endonuclease VIII</fullName>
    </alternativeName>
</protein>
<sequence length="263" mass="29833">MPEGPEIRRAADNLEAAIKGKPLTDVWFAFAQLKPYESQLTGQLVTRIETRGKALLTHFSNGLTLYSHNQLYGVWRVIDTGEIPQTTRILRVRLQTADKTILLYSASDIEMLTAEQLTTHPFLQRVGPDVLDARLTPEEVKARLLSPRFRNRQFSGLLLDQAFLAGLGNYLRVEILWQVGLTGQHKAKDLNEAQLNALSHALLDIPRLSYTTRGQADENKHHGALFRFKVFHRDGEACERCGGIIEKTTLSSRPFYWCPHCQK</sequence>
<reference key="1">
    <citation type="journal article" date="2011" name="J. Bacteriol.">
        <title>Comparative genomics of 28 Salmonella enterica isolates: evidence for CRISPR-mediated adaptive sublineage evolution.</title>
        <authorList>
            <person name="Fricke W.F."/>
            <person name="Mammel M.K."/>
            <person name="McDermott P.F."/>
            <person name="Tartera C."/>
            <person name="White D.G."/>
            <person name="Leclerc J.E."/>
            <person name="Ravel J."/>
            <person name="Cebula T.A."/>
        </authorList>
    </citation>
    <scope>NUCLEOTIDE SEQUENCE [LARGE SCALE GENOMIC DNA]</scope>
    <source>
        <strain>SL476</strain>
    </source>
</reference>
<gene>
    <name evidence="1" type="primary">nei</name>
    <name type="ordered locus">SeHA_C0852</name>
</gene>
<accession>B4TBC8</accession>
<proteinExistence type="inferred from homology"/>
<dbReference type="EC" id="3.2.2.-" evidence="1"/>
<dbReference type="EC" id="4.2.99.18" evidence="1"/>
<dbReference type="EMBL" id="CP001120">
    <property type="protein sequence ID" value="ACF69442.1"/>
    <property type="molecule type" value="Genomic_DNA"/>
</dbReference>
<dbReference type="RefSeq" id="WP_001113967.1">
    <property type="nucleotide sequence ID" value="NC_011083.1"/>
</dbReference>
<dbReference type="SMR" id="B4TBC8"/>
<dbReference type="KEGG" id="seh:SeHA_C0852"/>
<dbReference type="HOGENOM" id="CLU_038423_2_2_6"/>
<dbReference type="Proteomes" id="UP000001866">
    <property type="component" value="Chromosome"/>
</dbReference>
<dbReference type="GO" id="GO:0140078">
    <property type="term" value="F:class I DNA-(apurinic or apyrimidinic site) endonuclease activity"/>
    <property type="evidence" value="ECO:0007669"/>
    <property type="project" value="UniProtKB-EC"/>
</dbReference>
<dbReference type="GO" id="GO:0003684">
    <property type="term" value="F:damaged DNA binding"/>
    <property type="evidence" value="ECO:0007669"/>
    <property type="project" value="InterPro"/>
</dbReference>
<dbReference type="GO" id="GO:0000703">
    <property type="term" value="F:oxidized pyrimidine nucleobase lesion DNA N-glycosylase activity"/>
    <property type="evidence" value="ECO:0007669"/>
    <property type="project" value="UniProtKB-UniRule"/>
</dbReference>
<dbReference type="GO" id="GO:0008270">
    <property type="term" value="F:zinc ion binding"/>
    <property type="evidence" value="ECO:0007669"/>
    <property type="project" value="UniProtKB-UniRule"/>
</dbReference>
<dbReference type="GO" id="GO:0006284">
    <property type="term" value="P:base-excision repair"/>
    <property type="evidence" value="ECO:0007669"/>
    <property type="project" value="InterPro"/>
</dbReference>
<dbReference type="CDD" id="cd08965">
    <property type="entry name" value="EcNei-like_N"/>
    <property type="match status" value="1"/>
</dbReference>
<dbReference type="FunFam" id="1.10.8.50:FF:000005">
    <property type="entry name" value="Endonuclease 8"/>
    <property type="match status" value="1"/>
</dbReference>
<dbReference type="FunFam" id="3.20.190.10:FF:000002">
    <property type="entry name" value="Endonuclease 8"/>
    <property type="match status" value="1"/>
</dbReference>
<dbReference type="Gene3D" id="1.10.8.50">
    <property type="match status" value="1"/>
</dbReference>
<dbReference type="Gene3D" id="3.20.190.10">
    <property type="entry name" value="MutM-like, N-terminal"/>
    <property type="match status" value="1"/>
</dbReference>
<dbReference type="HAMAP" id="MF_01253">
    <property type="entry name" value="Endonuclease_8"/>
    <property type="match status" value="1"/>
</dbReference>
<dbReference type="InterPro" id="IPR015886">
    <property type="entry name" value="DNA_glyclase/AP_lyase_DNA-bd"/>
</dbReference>
<dbReference type="InterPro" id="IPR015887">
    <property type="entry name" value="DNA_glyclase_Znf_dom_DNA_BS"/>
</dbReference>
<dbReference type="InterPro" id="IPR044091">
    <property type="entry name" value="EcNei-like_N"/>
</dbReference>
<dbReference type="InterPro" id="IPR023713">
    <property type="entry name" value="Endonuclease-VIII"/>
</dbReference>
<dbReference type="InterPro" id="IPR012319">
    <property type="entry name" value="FPG_cat"/>
</dbReference>
<dbReference type="InterPro" id="IPR035937">
    <property type="entry name" value="MutM-like_N-ter"/>
</dbReference>
<dbReference type="InterPro" id="IPR010979">
    <property type="entry name" value="Ribosomal_uS13-like_H2TH"/>
</dbReference>
<dbReference type="InterPro" id="IPR000214">
    <property type="entry name" value="Znf_DNA_glyclase/AP_lyase"/>
</dbReference>
<dbReference type="InterPro" id="IPR010663">
    <property type="entry name" value="Znf_FPG/IleRS"/>
</dbReference>
<dbReference type="NCBIfam" id="NF007763">
    <property type="entry name" value="PRK10445.1"/>
    <property type="match status" value="1"/>
</dbReference>
<dbReference type="PANTHER" id="PTHR42697">
    <property type="entry name" value="ENDONUCLEASE 8"/>
    <property type="match status" value="1"/>
</dbReference>
<dbReference type="PANTHER" id="PTHR42697:SF1">
    <property type="entry name" value="ENDONUCLEASE 8"/>
    <property type="match status" value="1"/>
</dbReference>
<dbReference type="Pfam" id="PF01149">
    <property type="entry name" value="Fapy_DNA_glyco"/>
    <property type="match status" value="1"/>
</dbReference>
<dbReference type="Pfam" id="PF06831">
    <property type="entry name" value="H2TH"/>
    <property type="match status" value="1"/>
</dbReference>
<dbReference type="Pfam" id="PF06827">
    <property type="entry name" value="zf-FPG_IleRS"/>
    <property type="match status" value="1"/>
</dbReference>
<dbReference type="SMART" id="SM00898">
    <property type="entry name" value="Fapy_DNA_glyco"/>
    <property type="match status" value="1"/>
</dbReference>
<dbReference type="SMART" id="SM01232">
    <property type="entry name" value="H2TH"/>
    <property type="match status" value="1"/>
</dbReference>
<dbReference type="SUPFAM" id="SSF57716">
    <property type="entry name" value="Glucocorticoid receptor-like (DNA-binding domain)"/>
    <property type="match status" value="1"/>
</dbReference>
<dbReference type="SUPFAM" id="SSF81624">
    <property type="entry name" value="N-terminal domain of MutM-like DNA repair proteins"/>
    <property type="match status" value="1"/>
</dbReference>
<dbReference type="SUPFAM" id="SSF46946">
    <property type="entry name" value="S13-like H2TH domain"/>
    <property type="match status" value="1"/>
</dbReference>
<dbReference type="PROSITE" id="PS51068">
    <property type="entry name" value="FPG_CAT"/>
    <property type="match status" value="1"/>
</dbReference>
<dbReference type="PROSITE" id="PS01242">
    <property type="entry name" value="ZF_FPG_1"/>
    <property type="match status" value="1"/>
</dbReference>
<dbReference type="PROSITE" id="PS51066">
    <property type="entry name" value="ZF_FPG_2"/>
    <property type="match status" value="1"/>
</dbReference>